<keyword id="KW-0119">Carbohydrate metabolism</keyword>
<keyword id="KW-0326">Glycosidase</keyword>
<keyword id="KW-0378">Hydrolase</keyword>
<keyword id="KW-0464">Manganese</keyword>
<keyword id="KW-0479">Metal-binding</keyword>
<keyword id="KW-0520">NAD</keyword>
<proteinExistence type="evidence at protein level"/>
<feature type="chain" id="PRO_0000415284" description="Alpha-glucosidase">
    <location>
        <begin position="1"/>
        <end position="480"/>
    </location>
</feature>
<feature type="active site" description="Proton donor" evidence="1">
    <location>
        <position position="175"/>
    </location>
</feature>
<feature type="active site" description="Proton acceptor" evidence="1">
    <location>
        <position position="260"/>
    </location>
</feature>
<feature type="binding site" evidence="1">
    <location>
        <begin position="4"/>
        <end position="70"/>
    </location>
    <ligand>
        <name>NAD(+)</name>
        <dbReference type="ChEBI" id="CHEBI:57540"/>
    </ligand>
</feature>
<feature type="binding site" evidence="1">
    <location>
        <position position="119"/>
    </location>
    <ligand>
        <name>substrate</name>
    </ligand>
</feature>
<feature type="binding site" evidence="1">
    <location>
        <position position="153"/>
    </location>
    <ligand>
        <name>substrate</name>
    </ligand>
</feature>
<feature type="binding site" evidence="1">
    <location>
        <position position="174"/>
    </location>
    <ligand>
        <name>Mn(2+)</name>
        <dbReference type="ChEBI" id="CHEBI:29035"/>
    </ligand>
</feature>
<feature type="binding site" evidence="1">
    <location>
        <position position="203"/>
    </location>
    <ligand>
        <name>Mn(2+)</name>
        <dbReference type="ChEBI" id="CHEBI:29035"/>
    </ligand>
</feature>
<name>AGLA_THENE</name>
<accession>O86960</accession>
<gene>
    <name type="primary">aglA</name>
</gene>
<reference key="1">
    <citation type="journal article" date="2003" name="Mol. Biol. (Mosk.)">
        <title>Thermotoga neapolitana gene clusters participating in degradation of starch and maltodextins: molecular structure of the locus.</title>
        <authorList>
            <person name="Berezina O.V."/>
            <person name="Lunina N.A."/>
            <person name="Zverlov V.V."/>
            <person name="Naumoff D.G."/>
            <person name="Liebl W."/>
            <person name="Velikodvorskaya G.A."/>
        </authorList>
    </citation>
    <scope>NUCLEOTIDE SEQUENCE [GENOMIC DNA]</scope>
    <source>
        <strain>Z2706-MC24</strain>
    </source>
</reference>
<reference key="2">
    <citation type="journal article" date="2003" name="Mol. Biol. (Mosk.)">
        <title>Thermotoga neopolitina gene cluster, participating in degradation of starch and maltodextrins: expression of aglB and aglA gene in Escherichia coli, properties of recombinant enzymes.</title>
        <authorList>
            <person name="Lunina N.A."/>
            <person name="Berezina O.V."/>
            <person name="Veith B."/>
            <person name="Zverlov V.V."/>
            <person name="Vorob'eva I.P."/>
            <person name="Chekanovskaia L.A."/>
            <person name="Khromov I.S."/>
            <person name="Raash G."/>
            <person name="Libel W."/>
            <person name="Velikodvorskaia G.A."/>
        </authorList>
    </citation>
    <scope>FUNCTION</scope>
    <scope>CATALYTIC ACTIVITY</scope>
    <scope>COFACTOR</scope>
    <scope>SUBSTRATE SPECIFICITY</scope>
    <scope>BIOPHYSICOCHEMICAL PROPERTIES</scope>
    <scope>ACTIVITY REGULATION</scope>
    <scope>SUBUNIT</scope>
    <source>
        <strain>Z2706-MC24</strain>
    </source>
</reference>
<evidence type="ECO:0000250" key="1"/>
<evidence type="ECO:0000269" key="2">
    <source>
    </source>
</evidence>
<evidence type="ECO:0000305" key="3"/>
<dbReference type="EC" id="3.2.1.20"/>
<dbReference type="EMBL" id="AJ009832">
    <property type="protein sequence ID" value="CAA08868.1"/>
    <property type="status" value="ALT_FRAME"/>
    <property type="molecule type" value="Genomic_DNA"/>
</dbReference>
<dbReference type="SMR" id="O86960"/>
<dbReference type="CAZy" id="GH4">
    <property type="family name" value="Glycoside Hydrolase Family 4"/>
</dbReference>
<dbReference type="GO" id="GO:0004558">
    <property type="term" value="F:alpha-1,4-glucosidase activity"/>
    <property type="evidence" value="ECO:0007669"/>
    <property type="project" value="UniProtKB-EC"/>
</dbReference>
<dbReference type="GO" id="GO:0046872">
    <property type="term" value="F:metal ion binding"/>
    <property type="evidence" value="ECO:0007669"/>
    <property type="project" value="UniProtKB-KW"/>
</dbReference>
<dbReference type="GO" id="GO:0016616">
    <property type="term" value="F:oxidoreductase activity, acting on the CH-OH group of donors, NAD or NADP as acceptor"/>
    <property type="evidence" value="ECO:0007669"/>
    <property type="project" value="InterPro"/>
</dbReference>
<dbReference type="GO" id="GO:0005975">
    <property type="term" value="P:carbohydrate metabolic process"/>
    <property type="evidence" value="ECO:0007669"/>
    <property type="project" value="InterPro"/>
</dbReference>
<dbReference type="CDD" id="cd05297">
    <property type="entry name" value="GH4_alpha_glucosidase_galactosidase"/>
    <property type="match status" value="1"/>
</dbReference>
<dbReference type="Gene3D" id="3.90.1820.10">
    <property type="entry name" value="AglA-like glucosidase"/>
    <property type="match status" value="1"/>
</dbReference>
<dbReference type="InterPro" id="IPR053487">
    <property type="entry name" value="Alpha-glycosidase"/>
</dbReference>
<dbReference type="InterPro" id="IPR053715">
    <property type="entry name" value="GH4_Enzyme_sf"/>
</dbReference>
<dbReference type="InterPro" id="IPR001088">
    <property type="entry name" value="Glyco_hydro_4"/>
</dbReference>
<dbReference type="InterPro" id="IPR022616">
    <property type="entry name" value="Glyco_hydro_4_C"/>
</dbReference>
<dbReference type="InterPro" id="IPR015955">
    <property type="entry name" value="Lactate_DH/Glyco_Ohase_4_C"/>
</dbReference>
<dbReference type="InterPro" id="IPR036291">
    <property type="entry name" value="NAD(P)-bd_dom_sf"/>
</dbReference>
<dbReference type="NCBIfam" id="NF041089">
    <property type="entry name" value="alpha_gluc_AglA"/>
    <property type="match status" value="1"/>
</dbReference>
<dbReference type="PANTHER" id="PTHR32092">
    <property type="entry name" value="6-PHOSPHO-BETA-GLUCOSIDASE-RELATED"/>
    <property type="match status" value="1"/>
</dbReference>
<dbReference type="PANTHER" id="PTHR32092:SF4">
    <property type="entry name" value="ALPHA-GLUCOSIDASE"/>
    <property type="match status" value="1"/>
</dbReference>
<dbReference type="Pfam" id="PF02056">
    <property type="entry name" value="Glyco_hydro_4"/>
    <property type="match status" value="1"/>
</dbReference>
<dbReference type="Pfam" id="PF11975">
    <property type="entry name" value="Glyco_hydro_4C"/>
    <property type="match status" value="1"/>
</dbReference>
<dbReference type="PRINTS" id="PR00732">
    <property type="entry name" value="GLHYDRLASE4"/>
</dbReference>
<dbReference type="SUPFAM" id="SSF56327">
    <property type="entry name" value="LDH C-terminal domain-like"/>
    <property type="match status" value="1"/>
</dbReference>
<dbReference type="SUPFAM" id="SSF51735">
    <property type="entry name" value="NAD(P)-binding Rossmann-fold domains"/>
    <property type="match status" value="1"/>
</dbReference>
<sequence>MPAVKIGIIGAGSAVFSLRLVSDLCKTPGLSGSTVTLMDIDEERLDAVLTIAKKYVEEVGADLKFEKTTSVDEAIADADFVINTAMVGGHTYLEKVRRISEKYGYYRGIDAQEFNMVSDYYTFSNYNQLKYFVDIARKIERLSPKAWYSAAANPVFEGTTLVTRTVPIKAVGFCHGHYGVMEIIEKLGLERKQVDWQVAGVNHGIWLNRFRYNGEDAYPLLPRWISEKSKDWKPENPFNDQLSPAAIDMYKFYGVMPIGDTVRNASWRYHRDLETKKRWYGEPWGGADSEIGWKWYQDTLGKVTDITKKVAKFIKENPALKLSDLGSVLGKDLSEKQFVLEVEKILDPEKKSGEQHISFHDALLNDNRSRFVINIPNKGIIQGIDDDVVVEVPAVVDRDGIHPEKIDPPLPERVVKYYLRPRIMRMEMALEAFLTGDIRIIKEVLYRDPRTKSDEQVEKVIEEILSLPENEEMRKNYLKK</sequence>
<comment type="function">
    <text evidence="2">Is able to hydrolyze diverse types of alpha-glycoside bonds in di- and trisaccharides: alpha-1,4 bonds of maltose and maltotriose, alpha-1,1 bonds of trehalose, alpha-1,2 bonds of sucrose, alpha-1,3 bonds of turanose and melizitose, alpha-1,6 bonds of isomaltose and melibiose. AglA is not specific with respect to the configuration at the C-4 position of its substrates because it also possesses alpha-galactosidase activity. Acts on the substrate from the non-reducing end of the chain. The activity of AglA drops with increasing length of the saccharide chain. Does not hydrolyze alpha-, beta-, and gamma-cyclodextrins or polysaccharides (starch, pullulan, amylose, amylopectin, glycogen). Does not cleave beta-glycosidic bonds in di-, oligo-, or polysaccharides.</text>
</comment>
<comment type="catalytic activity">
    <reaction evidence="2">
        <text>Hydrolysis of terminal, non-reducing (1-&gt;4)-linked alpha-D-glucose residues with release of alpha-D-glucose.</text>
        <dbReference type="EC" id="3.2.1.20"/>
    </reaction>
</comment>
<comment type="cofactor">
    <cofactor evidence="2">
        <name>NAD(+)</name>
        <dbReference type="ChEBI" id="CHEBI:57540"/>
    </cofactor>
    <text evidence="2">Binds 1 NAD(+) per subunit.</text>
</comment>
<comment type="cofactor">
    <cofactor evidence="2">
        <name>Mn(2+)</name>
        <dbReference type="ChEBI" id="CHEBI:29035"/>
    </cofactor>
    <text evidence="2">Binds 1 Mn(2+) ion per subunit.</text>
</comment>
<comment type="activity regulation">
    <text evidence="2">Inhibited by EDTA in vitro.</text>
</comment>
<comment type="biophysicochemical properties">
    <phDependence>
        <text evidence="2">Optimum pH is 7.5.</text>
    </phDependence>
    <temperatureDependence>
        <text evidence="2">Optimum temperature is 85 degrees Celsius. Retains 80% activity after incubation at 85 degrees Celsius for 3 hours.</text>
    </temperatureDependence>
</comment>
<comment type="subunit">
    <text evidence="2">Homodimer.</text>
</comment>
<comment type="similarity">
    <text evidence="3">Belongs to the glycosyl hydrolase 4 family.</text>
</comment>
<comment type="sequence caution" evidence="3">
    <conflict type="frameshift">
        <sequence resource="EMBL-CDS" id="CAA08868"/>
    </conflict>
</comment>
<organism>
    <name type="scientific">Thermotoga neapolitana</name>
    <dbReference type="NCBI Taxonomy" id="2337"/>
    <lineage>
        <taxon>Bacteria</taxon>
        <taxon>Thermotogati</taxon>
        <taxon>Thermotogota</taxon>
        <taxon>Thermotogae</taxon>
        <taxon>Thermotogales</taxon>
        <taxon>Thermotogaceae</taxon>
        <taxon>Thermotoga</taxon>
    </lineage>
</organism>
<protein>
    <recommendedName>
        <fullName>Alpha-glucosidase</fullName>
        <ecNumber>3.2.1.20</ecNumber>
    </recommendedName>
    <alternativeName>
        <fullName>Maltase</fullName>
    </alternativeName>
</protein>